<protein>
    <recommendedName>
        <fullName>Rho GTPase-activating protein 3</fullName>
    </recommendedName>
    <alternativeName>
        <fullName>Rho-type GTPase-activating protein 3</fullName>
    </alternativeName>
</protein>
<gene>
    <name type="primary">ROPGAP3</name>
    <name type="ordered locus">At2g46710</name>
    <name type="ORF">T3A4.9</name>
</gene>
<evidence type="ECO:0000255" key="1">
    <source>
        <dbReference type="PROSITE-ProRule" id="PRU00172"/>
    </source>
</evidence>
<evidence type="ECO:0000256" key="2">
    <source>
        <dbReference type="SAM" id="MobiDB-lite"/>
    </source>
</evidence>
<evidence type="ECO:0000269" key="3">
    <source>
    </source>
</evidence>
<evidence type="ECO:0000305" key="4"/>
<evidence type="ECO:0000305" key="5">
    <source>
    </source>
</evidence>
<feature type="chain" id="PRO_0000422718" description="Rho GTPase-activating protein 3">
    <location>
        <begin position="1"/>
        <end position="455"/>
    </location>
</feature>
<feature type="domain" description="CRIB">
    <location>
        <begin position="105"/>
        <end position="118"/>
    </location>
</feature>
<feature type="domain" description="Rho-GAP" evidence="1">
    <location>
        <begin position="153"/>
        <end position="331"/>
    </location>
</feature>
<feature type="region of interest" description="Disordered" evidence="2">
    <location>
        <begin position="1"/>
        <end position="68"/>
    </location>
</feature>
<feature type="region of interest" description="Disordered" evidence="2">
    <location>
        <begin position="342"/>
        <end position="366"/>
    </location>
</feature>
<feature type="region of interest" description="Disordered" evidence="2">
    <location>
        <begin position="432"/>
        <end position="455"/>
    </location>
</feature>
<feature type="compositionally biased region" description="Polar residues" evidence="2">
    <location>
        <begin position="1"/>
        <end position="12"/>
    </location>
</feature>
<feature type="compositionally biased region" description="Basic and acidic residues" evidence="2">
    <location>
        <begin position="24"/>
        <end position="33"/>
    </location>
</feature>
<feature type="compositionally biased region" description="Low complexity" evidence="2">
    <location>
        <begin position="43"/>
        <end position="54"/>
    </location>
</feature>
<feature type="compositionally biased region" description="Polar residues" evidence="2">
    <location>
        <begin position="55"/>
        <end position="64"/>
    </location>
</feature>
<feature type="compositionally biased region" description="Basic and acidic residues" evidence="2">
    <location>
        <begin position="435"/>
        <end position="446"/>
    </location>
</feature>
<feature type="site" description="Arginine finger; crucial for GTP hydrolysis by stabilizing the transition state" evidence="1">
    <location>
        <position position="190"/>
    </location>
</feature>
<reference key="1">
    <citation type="journal article" date="1999" name="Nature">
        <title>Sequence and analysis of chromosome 2 of the plant Arabidopsis thaliana.</title>
        <authorList>
            <person name="Lin X."/>
            <person name="Kaul S."/>
            <person name="Rounsley S.D."/>
            <person name="Shea T.P."/>
            <person name="Benito M.-I."/>
            <person name="Town C.D."/>
            <person name="Fujii C.Y."/>
            <person name="Mason T.M."/>
            <person name="Bowman C.L."/>
            <person name="Barnstead M.E."/>
            <person name="Feldblyum T.V."/>
            <person name="Buell C.R."/>
            <person name="Ketchum K.A."/>
            <person name="Lee J.J."/>
            <person name="Ronning C.M."/>
            <person name="Koo H.L."/>
            <person name="Moffat K.S."/>
            <person name="Cronin L.A."/>
            <person name="Shen M."/>
            <person name="Pai G."/>
            <person name="Van Aken S."/>
            <person name="Umayam L."/>
            <person name="Tallon L.J."/>
            <person name="Gill J.E."/>
            <person name="Adams M.D."/>
            <person name="Carrera A.J."/>
            <person name="Creasy T.H."/>
            <person name="Goodman H.M."/>
            <person name="Somerville C.R."/>
            <person name="Copenhaver G.P."/>
            <person name="Preuss D."/>
            <person name="Nierman W.C."/>
            <person name="White O."/>
            <person name="Eisen J.A."/>
            <person name="Salzberg S.L."/>
            <person name="Fraser C.M."/>
            <person name="Venter J.C."/>
        </authorList>
    </citation>
    <scope>NUCLEOTIDE SEQUENCE [LARGE SCALE GENOMIC DNA]</scope>
    <source>
        <strain>cv. Columbia</strain>
    </source>
</reference>
<reference key="2">
    <citation type="journal article" date="2017" name="Plant J.">
        <title>Araport11: a complete reannotation of the Arabidopsis thaliana reference genome.</title>
        <authorList>
            <person name="Cheng C.Y."/>
            <person name="Krishnakumar V."/>
            <person name="Chan A.P."/>
            <person name="Thibaud-Nissen F."/>
            <person name="Schobel S."/>
            <person name="Town C.D."/>
        </authorList>
    </citation>
    <scope>GENOME REANNOTATION</scope>
    <source>
        <strain>cv. Columbia</strain>
    </source>
</reference>
<reference key="3">
    <citation type="journal article" date="2002" name="Science">
        <title>Functional annotation of a full-length Arabidopsis cDNA collection.</title>
        <authorList>
            <person name="Seki M."/>
            <person name="Narusaka M."/>
            <person name="Kamiya A."/>
            <person name="Ishida J."/>
            <person name="Satou M."/>
            <person name="Sakurai T."/>
            <person name="Nakajima M."/>
            <person name="Enju A."/>
            <person name="Akiyama K."/>
            <person name="Oono Y."/>
            <person name="Muramatsu M."/>
            <person name="Hayashizaki Y."/>
            <person name="Kawai J."/>
            <person name="Carninci P."/>
            <person name="Itoh M."/>
            <person name="Ishii Y."/>
            <person name="Arakawa T."/>
            <person name="Shibata K."/>
            <person name="Shinagawa A."/>
            <person name="Shinozaki K."/>
        </authorList>
    </citation>
    <scope>NUCLEOTIDE SEQUENCE [LARGE SCALE MRNA]</scope>
    <source>
        <strain>cv. Columbia</strain>
    </source>
</reference>
<reference key="4">
    <citation type="journal article" date="2003" name="Science">
        <title>Empirical analysis of transcriptional activity in the Arabidopsis genome.</title>
        <authorList>
            <person name="Yamada K."/>
            <person name="Lim J."/>
            <person name="Dale J.M."/>
            <person name="Chen H."/>
            <person name="Shinn P."/>
            <person name="Palm C.J."/>
            <person name="Southwick A.M."/>
            <person name="Wu H.C."/>
            <person name="Kim C.J."/>
            <person name="Nguyen M."/>
            <person name="Pham P.K."/>
            <person name="Cheuk R.F."/>
            <person name="Karlin-Newmann G."/>
            <person name="Liu S.X."/>
            <person name="Lam B."/>
            <person name="Sakano H."/>
            <person name="Wu T."/>
            <person name="Yu G."/>
            <person name="Miranda M."/>
            <person name="Quach H.L."/>
            <person name="Tripp M."/>
            <person name="Chang C.H."/>
            <person name="Lee J.M."/>
            <person name="Toriumi M.J."/>
            <person name="Chan M.M."/>
            <person name="Tang C.C."/>
            <person name="Onodera C.S."/>
            <person name="Deng J.M."/>
            <person name="Akiyama K."/>
            <person name="Ansari Y."/>
            <person name="Arakawa T."/>
            <person name="Banh J."/>
            <person name="Banno F."/>
            <person name="Bowser L."/>
            <person name="Brooks S.Y."/>
            <person name="Carninci P."/>
            <person name="Chao Q."/>
            <person name="Choy N."/>
            <person name="Enju A."/>
            <person name="Goldsmith A.D."/>
            <person name="Gurjal M."/>
            <person name="Hansen N.F."/>
            <person name="Hayashizaki Y."/>
            <person name="Johnson-Hopson C."/>
            <person name="Hsuan V.W."/>
            <person name="Iida K."/>
            <person name="Karnes M."/>
            <person name="Khan S."/>
            <person name="Koesema E."/>
            <person name="Ishida J."/>
            <person name="Jiang P.X."/>
            <person name="Jones T."/>
            <person name="Kawai J."/>
            <person name="Kamiya A."/>
            <person name="Meyers C."/>
            <person name="Nakajima M."/>
            <person name="Narusaka M."/>
            <person name="Seki M."/>
            <person name="Sakurai T."/>
            <person name="Satou M."/>
            <person name="Tamse R."/>
            <person name="Vaysberg M."/>
            <person name="Wallender E.K."/>
            <person name="Wong C."/>
            <person name="Yamamura Y."/>
            <person name="Yuan S."/>
            <person name="Shinozaki K."/>
            <person name="Davis R.W."/>
            <person name="Theologis A."/>
            <person name="Ecker J.R."/>
        </authorList>
    </citation>
    <scope>NUCLEOTIDE SEQUENCE [LARGE SCALE MRNA]</scope>
    <source>
        <strain>cv. Columbia</strain>
    </source>
</reference>
<reference key="5">
    <citation type="journal article" date="2012" name="Science">
        <title>Initiation of cell wall pattern by a Rho- and microtubule-driven symmetry breaking.</title>
        <authorList>
            <person name="Oda Y."/>
            <person name="Fukuda H."/>
        </authorList>
    </citation>
    <scope>FUNCTION</scope>
    <scope>SUBCELLULAR LOCATION</scope>
    <scope>TISSUE SPECIFICITY</scope>
</reference>
<sequence length="455" mass="50782">MTNFSRSKSTGTIGFPEFKPTRPGPDKYENIHNDDDEYEEGHSTTSTDYYDASTPLSSHASRSGNGSGSGQLTVVDLLAAVLRKSLVMSCAMERGEDDVVASMDIGWPTEVKHVSHVTFDRFNGFLGLPSELEPEVPPRAPSASVSVFGVSAKSMQCSYDDRGNSVPTILLRMQKRLYTEGGLKAEGIFRINPDNGKEEHVRRQLNCGVVPRGIDVHCLAGLIKAWFRELPTGVLDVLTPEQVMRCNTEEDCSRLVILLPPVESAILDWAIGLMADVVEHEQFNKMNARNVAMVFAPNMTQMADPLTALIHAVQVMNFLKTLILMNLKERENADAKARWLKKQTSDPSEEWESQHSEILSPEKPNNNNPKFLRVATLCRLEADNEEEFWNIKKRNDHEGVLDTSSGNGNIGPVQRLCKHPLFQLSKSTKKAFVSNRDEGRKGREAWSSRLSSLPW</sequence>
<proteinExistence type="evidence at transcript level"/>
<accession>Q8GYY5</accession>
<accession>Q9ZUZ1</accession>
<keyword id="KW-1003">Cell membrane</keyword>
<keyword id="KW-0217">Developmental protein</keyword>
<keyword id="KW-0343">GTPase activation</keyword>
<keyword id="KW-0472">Membrane</keyword>
<keyword id="KW-1185">Reference proteome</keyword>
<comment type="function">
    <text evidence="3">Acts as a GTPase activator for the Rac-type GTPase by converting it to an inactive GDP-bound state. Involved in secondary wall pattern formation. In association with ROPGEF4, mediates local activation of ARAC10/ROP11 to initiate the distinct pattern of secondary cell walls in xylem cells.</text>
</comment>
<comment type="subcellular location">
    <subcellularLocation>
        <location evidence="5">Cell membrane</location>
        <topology evidence="5">Peripheral membrane protein</topology>
    </subcellularLocation>
    <text>Localized at plasma membrane in the secondary wall pits.</text>
</comment>
<comment type="tissue specificity">
    <text evidence="3">Expressed in differentiating xylem cells.</text>
</comment>
<comment type="sequence caution" evidence="4">
    <conflict type="erroneous gene model prediction">
        <sequence resource="EMBL-CDS" id="AAC69928"/>
    </conflict>
</comment>
<organism>
    <name type="scientific">Arabidopsis thaliana</name>
    <name type="common">Mouse-ear cress</name>
    <dbReference type="NCBI Taxonomy" id="3702"/>
    <lineage>
        <taxon>Eukaryota</taxon>
        <taxon>Viridiplantae</taxon>
        <taxon>Streptophyta</taxon>
        <taxon>Embryophyta</taxon>
        <taxon>Tracheophyta</taxon>
        <taxon>Spermatophyta</taxon>
        <taxon>Magnoliopsida</taxon>
        <taxon>eudicotyledons</taxon>
        <taxon>Gunneridae</taxon>
        <taxon>Pentapetalae</taxon>
        <taxon>rosids</taxon>
        <taxon>malvids</taxon>
        <taxon>Brassicales</taxon>
        <taxon>Brassicaceae</taxon>
        <taxon>Camelineae</taxon>
        <taxon>Arabidopsis</taxon>
    </lineage>
</organism>
<name>RGAP3_ARATH</name>
<dbReference type="EMBL" id="AC005819">
    <property type="protein sequence ID" value="AAC69928.1"/>
    <property type="status" value="ALT_SEQ"/>
    <property type="molecule type" value="Genomic_DNA"/>
</dbReference>
<dbReference type="EMBL" id="CP002685">
    <property type="protein sequence ID" value="AEC10744.1"/>
    <property type="molecule type" value="Genomic_DNA"/>
</dbReference>
<dbReference type="EMBL" id="AK117311">
    <property type="protein sequence ID" value="BAC41982.1"/>
    <property type="molecule type" value="mRNA"/>
</dbReference>
<dbReference type="EMBL" id="BT005369">
    <property type="protein sequence ID" value="AAO63433.1"/>
    <property type="molecule type" value="mRNA"/>
</dbReference>
<dbReference type="PIR" id="C84906">
    <property type="entry name" value="C84906"/>
</dbReference>
<dbReference type="RefSeq" id="NP_850458.1">
    <property type="nucleotide sequence ID" value="NM_180127.2"/>
</dbReference>
<dbReference type="SMR" id="Q8GYY5"/>
<dbReference type="BioGRID" id="4618">
    <property type="interactions" value="1"/>
</dbReference>
<dbReference type="FunCoup" id="Q8GYY5">
    <property type="interactions" value="422"/>
</dbReference>
<dbReference type="STRING" id="3702.Q8GYY5"/>
<dbReference type="iPTMnet" id="Q8GYY5"/>
<dbReference type="PaxDb" id="3702-AT2G46710.1"/>
<dbReference type="ProteomicsDB" id="236179"/>
<dbReference type="EnsemblPlants" id="AT2G46710.1">
    <property type="protein sequence ID" value="AT2G46710.1"/>
    <property type="gene ID" value="AT2G46710"/>
</dbReference>
<dbReference type="GeneID" id="819283"/>
<dbReference type="Gramene" id="AT2G46710.1">
    <property type="protein sequence ID" value="AT2G46710.1"/>
    <property type="gene ID" value="AT2G46710"/>
</dbReference>
<dbReference type="KEGG" id="ath:AT2G46710"/>
<dbReference type="Araport" id="AT2G46710"/>
<dbReference type="TAIR" id="AT2G46710">
    <property type="gene designation" value="ROPGAP3"/>
</dbReference>
<dbReference type="eggNOG" id="KOG4270">
    <property type="taxonomic scope" value="Eukaryota"/>
</dbReference>
<dbReference type="HOGENOM" id="CLU_031591_5_1_1"/>
<dbReference type="InParanoid" id="Q8GYY5"/>
<dbReference type="OMA" id="WNIEKRN"/>
<dbReference type="OrthoDB" id="185175at2759"/>
<dbReference type="PhylomeDB" id="Q8GYY5"/>
<dbReference type="PRO" id="PR:Q8GYY5"/>
<dbReference type="Proteomes" id="UP000006548">
    <property type="component" value="Chromosome 2"/>
</dbReference>
<dbReference type="ExpressionAtlas" id="Q8GYY5">
    <property type="expression patterns" value="baseline and differential"/>
</dbReference>
<dbReference type="GO" id="GO:0005886">
    <property type="term" value="C:plasma membrane"/>
    <property type="evidence" value="ECO:0000314"/>
    <property type="project" value="TAIR"/>
</dbReference>
<dbReference type="GO" id="GO:0009531">
    <property type="term" value="C:secondary cell wall"/>
    <property type="evidence" value="ECO:0000314"/>
    <property type="project" value="TAIR"/>
</dbReference>
<dbReference type="GO" id="GO:0005096">
    <property type="term" value="F:GTPase activator activity"/>
    <property type="evidence" value="ECO:0007669"/>
    <property type="project" value="UniProtKB-KW"/>
</dbReference>
<dbReference type="GO" id="GO:0009664">
    <property type="term" value="P:plant-type cell wall organization"/>
    <property type="evidence" value="ECO:0000315"/>
    <property type="project" value="TAIR"/>
</dbReference>
<dbReference type="GO" id="GO:0007165">
    <property type="term" value="P:signal transduction"/>
    <property type="evidence" value="ECO:0007669"/>
    <property type="project" value="InterPro"/>
</dbReference>
<dbReference type="CDD" id="cd00132">
    <property type="entry name" value="CRIB"/>
    <property type="match status" value="1"/>
</dbReference>
<dbReference type="CDD" id="cd00159">
    <property type="entry name" value="RhoGAP"/>
    <property type="match status" value="1"/>
</dbReference>
<dbReference type="FunFam" id="1.10.555.10:FF:000046">
    <property type="entry name" value="Rho GTPase-activating protein 5"/>
    <property type="match status" value="1"/>
</dbReference>
<dbReference type="Gene3D" id="3.90.810.10">
    <property type="entry name" value="CRIB domain"/>
    <property type="match status" value="1"/>
</dbReference>
<dbReference type="Gene3D" id="1.10.555.10">
    <property type="entry name" value="Rho GTPase activation protein"/>
    <property type="match status" value="1"/>
</dbReference>
<dbReference type="InterPro" id="IPR000095">
    <property type="entry name" value="CRIB_dom"/>
</dbReference>
<dbReference type="InterPro" id="IPR036936">
    <property type="entry name" value="CRIB_dom_sf"/>
</dbReference>
<dbReference type="InterPro" id="IPR008936">
    <property type="entry name" value="Rho_GTPase_activation_prot"/>
</dbReference>
<dbReference type="InterPro" id="IPR000198">
    <property type="entry name" value="RhoGAP_dom"/>
</dbReference>
<dbReference type="InterPro" id="IPR044785">
    <property type="entry name" value="RopGAP1-5"/>
</dbReference>
<dbReference type="PANTHER" id="PTHR23177">
    <property type="entry name" value="MKIAA1688 PROTEIN"/>
    <property type="match status" value="1"/>
</dbReference>
<dbReference type="PANTHER" id="PTHR23177:SF74">
    <property type="entry name" value="RHO GTPASE-ACTIVATING PROTEIN 3"/>
    <property type="match status" value="1"/>
</dbReference>
<dbReference type="Pfam" id="PF00620">
    <property type="entry name" value="RhoGAP"/>
    <property type="match status" value="1"/>
</dbReference>
<dbReference type="SMART" id="SM00285">
    <property type="entry name" value="PBD"/>
    <property type="match status" value="1"/>
</dbReference>
<dbReference type="SMART" id="SM00324">
    <property type="entry name" value="RhoGAP"/>
    <property type="match status" value="1"/>
</dbReference>
<dbReference type="SUPFAM" id="SSF48350">
    <property type="entry name" value="GTPase activation domain, GAP"/>
    <property type="match status" value="1"/>
</dbReference>
<dbReference type="PROSITE" id="PS50238">
    <property type="entry name" value="RHOGAP"/>
    <property type="match status" value="1"/>
</dbReference>